<dbReference type="EC" id="1.17.7.4" evidence="1"/>
<dbReference type="EMBL" id="CP000932">
    <property type="protein sequence ID" value="ACM64513.1"/>
    <property type="molecule type" value="Genomic_DNA"/>
</dbReference>
<dbReference type="RefSeq" id="WP_012661896.1">
    <property type="nucleotide sequence ID" value="NC_012039.1"/>
</dbReference>
<dbReference type="SMR" id="B9KD74"/>
<dbReference type="STRING" id="306263.Cla_1191"/>
<dbReference type="KEGG" id="cla:CLA_1191"/>
<dbReference type="PATRIC" id="fig|306263.5.peg.1180"/>
<dbReference type="eggNOG" id="COG0761">
    <property type="taxonomic scope" value="Bacteria"/>
</dbReference>
<dbReference type="HOGENOM" id="CLU_027486_0_1_7"/>
<dbReference type="UniPathway" id="UPA00056">
    <property type="reaction ID" value="UER00097"/>
</dbReference>
<dbReference type="UniPathway" id="UPA00059">
    <property type="reaction ID" value="UER00105"/>
</dbReference>
<dbReference type="Proteomes" id="UP000007727">
    <property type="component" value="Chromosome"/>
</dbReference>
<dbReference type="GO" id="GO:0051539">
    <property type="term" value="F:4 iron, 4 sulfur cluster binding"/>
    <property type="evidence" value="ECO:0007669"/>
    <property type="project" value="UniProtKB-UniRule"/>
</dbReference>
<dbReference type="GO" id="GO:0051745">
    <property type="term" value="F:4-hydroxy-3-methylbut-2-enyl diphosphate reductase activity"/>
    <property type="evidence" value="ECO:0007669"/>
    <property type="project" value="UniProtKB-UniRule"/>
</dbReference>
<dbReference type="GO" id="GO:0046872">
    <property type="term" value="F:metal ion binding"/>
    <property type="evidence" value="ECO:0007669"/>
    <property type="project" value="UniProtKB-KW"/>
</dbReference>
<dbReference type="GO" id="GO:0050992">
    <property type="term" value="P:dimethylallyl diphosphate biosynthetic process"/>
    <property type="evidence" value="ECO:0007669"/>
    <property type="project" value="UniProtKB-UniRule"/>
</dbReference>
<dbReference type="GO" id="GO:0019288">
    <property type="term" value="P:isopentenyl diphosphate biosynthetic process, methylerythritol 4-phosphate pathway"/>
    <property type="evidence" value="ECO:0007669"/>
    <property type="project" value="UniProtKB-UniRule"/>
</dbReference>
<dbReference type="GO" id="GO:0016114">
    <property type="term" value="P:terpenoid biosynthetic process"/>
    <property type="evidence" value="ECO:0007669"/>
    <property type="project" value="UniProtKB-UniRule"/>
</dbReference>
<dbReference type="CDD" id="cd13944">
    <property type="entry name" value="lytB_ispH"/>
    <property type="match status" value="1"/>
</dbReference>
<dbReference type="Gene3D" id="3.40.50.11270">
    <property type="match status" value="1"/>
</dbReference>
<dbReference type="Gene3D" id="3.40.1010.20">
    <property type="entry name" value="4-hydroxy-3-methylbut-2-enyl diphosphate reductase, catalytic domain"/>
    <property type="match status" value="2"/>
</dbReference>
<dbReference type="HAMAP" id="MF_00191">
    <property type="entry name" value="IspH"/>
    <property type="match status" value="1"/>
</dbReference>
<dbReference type="InterPro" id="IPR003451">
    <property type="entry name" value="LytB/IspH"/>
</dbReference>
<dbReference type="NCBIfam" id="TIGR00216">
    <property type="entry name" value="ispH_lytB"/>
    <property type="match status" value="1"/>
</dbReference>
<dbReference type="NCBIfam" id="NF002187">
    <property type="entry name" value="PRK01045.1-1"/>
    <property type="match status" value="1"/>
</dbReference>
<dbReference type="PANTHER" id="PTHR30426">
    <property type="entry name" value="4-HYDROXY-3-METHYLBUT-2-ENYL DIPHOSPHATE REDUCTASE"/>
    <property type="match status" value="1"/>
</dbReference>
<dbReference type="PANTHER" id="PTHR30426:SF0">
    <property type="entry name" value="4-HYDROXY-3-METHYLBUT-2-ENYL DIPHOSPHATE REDUCTASE"/>
    <property type="match status" value="1"/>
</dbReference>
<dbReference type="Pfam" id="PF02401">
    <property type="entry name" value="LYTB"/>
    <property type="match status" value="1"/>
</dbReference>
<name>ISPH_CAMLR</name>
<gene>
    <name evidence="1" type="primary">ispH</name>
    <name type="ordered locus">Cla_1191</name>
</gene>
<feature type="chain" id="PRO_1000124280" description="4-hydroxy-3-methylbut-2-enyl diphosphate reductase">
    <location>
        <begin position="1"/>
        <end position="278"/>
    </location>
</feature>
<feature type="active site" description="Proton donor" evidence="1">
    <location>
        <position position="122"/>
    </location>
</feature>
<feature type="binding site" evidence="1">
    <location>
        <position position="12"/>
    </location>
    <ligand>
        <name>[4Fe-4S] cluster</name>
        <dbReference type="ChEBI" id="CHEBI:49883"/>
    </ligand>
</feature>
<feature type="binding site" evidence="1">
    <location>
        <position position="36"/>
    </location>
    <ligand>
        <name>(2E)-4-hydroxy-3-methylbut-2-enyl diphosphate</name>
        <dbReference type="ChEBI" id="CHEBI:128753"/>
    </ligand>
</feature>
<feature type="binding site" evidence="1">
    <location>
        <position position="36"/>
    </location>
    <ligand>
        <name>dimethylallyl diphosphate</name>
        <dbReference type="ChEBI" id="CHEBI:57623"/>
    </ligand>
</feature>
<feature type="binding site" evidence="1">
    <location>
        <position position="36"/>
    </location>
    <ligand>
        <name>isopentenyl diphosphate</name>
        <dbReference type="ChEBI" id="CHEBI:128769"/>
    </ligand>
</feature>
<feature type="binding site" evidence="1">
    <location>
        <position position="70"/>
    </location>
    <ligand>
        <name>(2E)-4-hydroxy-3-methylbut-2-enyl diphosphate</name>
        <dbReference type="ChEBI" id="CHEBI:128753"/>
    </ligand>
</feature>
<feature type="binding site" evidence="1">
    <location>
        <position position="70"/>
    </location>
    <ligand>
        <name>dimethylallyl diphosphate</name>
        <dbReference type="ChEBI" id="CHEBI:57623"/>
    </ligand>
</feature>
<feature type="binding site" evidence="1">
    <location>
        <position position="70"/>
    </location>
    <ligand>
        <name>isopentenyl diphosphate</name>
        <dbReference type="ChEBI" id="CHEBI:128769"/>
    </ligand>
</feature>
<feature type="binding site" evidence="1">
    <location>
        <position position="92"/>
    </location>
    <ligand>
        <name>[4Fe-4S] cluster</name>
        <dbReference type="ChEBI" id="CHEBI:49883"/>
    </ligand>
</feature>
<feature type="binding site" evidence="1">
    <location>
        <position position="120"/>
    </location>
    <ligand>
        <name>(2E)-4-hydroxy-3-methylbut-2-enyl diphosphate</name>
        <dbReference type="ChEBI" id="CHEBI:128753"/>
    </ligand>
</feature>
<feature type="binding site" evidence="1">
    <location>
        <position position="120"/>
    </location>
    <ligand>
        <name>dimethylallyl diphosphate</name>
        <dbReference type="ChEBI" id="CHEBI:57623"/>
    </ligand>
</feature>
<feature type="binding site" evidence="1">
    <location>
        <position position="120"/>
    </location>
    <ligand>
        <name>isopentenyl diphosphate</name>
        <dbReference type="ChEBI" id="CHEBI:128769"/>
    </ligand>
</feature>
<feature type="binding site" evidence="1">
    <location>
        <position position="158"/>
    </location>
    <ligand>
        <name>(2E)-4-hydroxy-3-methylbut-2-enyl diphosphate</name>
        <dbReference type="ChEBI" id="CHEBI:128753"/>
    </ligand>
</feature>
<feature type="binding site" evidence="1">
    <location>
        <position position="186"/>
    </location>
    <ligand>
        <name>[4Fe-4S] cluster</name>
        <dbReference type="ChEBI" id="CHEBI:49883"/>
    </ligand>
</feature>
<feature type="binding site" evidence="1">
    <location>
        <position position="214"/>
    </location>
    <ligand>
        <name>(2E)-4-hydroxy-3-methylbut-2-enyl diphosphate</name>
        <dbReference type="ChEBI" id="CHEBI:128753"/>
    </ligand>
</feature>
<feature type="binding site" evidence="1">
    <location>
        <position position="214"/>
    </location>
    <ligand>
        <name>dimethylallyl diphosphate</name>
        <dbReference type="ChEBI" id="CHEBI:57623"/>
    </ligand>
</feature>
<feature type="binding site" evidence="1">
    <location>
        <position position="214"/>
    </location>
    <ligand>
        <name>isopentenyl diphosphate</name>
        <dbReference type="ChEBI" id="CHEBI:128769"/>
    </ligand>
</feature>
<feature type="binding site" evidence="1">
    <location>
        <position position="216"/>
    </location>
    <ligand>
        <name>(2E)-4-hydroxy-3-methylbut-2-enyl diphosphate</name>
        <dbReference type="ChEBI" id="CHEBI:128753"/>
    </ligand>
</feature>
<feature type="binding site" evidence="1">
    <location>
        <position position="216"/>
    </location>
    <ligand>
        <name>dimethylallyl diphosphate</name>
        <dbReference type="ChEBI" id="CHEBI:57623"/>
    </ligand>
</feature>
<feature type="binding site" evidence="1">
    <location>
        <position position="216"/>
    </location>
    <ligand>
        <name>isopentenyl diphosphate</name>
        <dbReference type="ChEBI" id="CHEBI:128769"/>
    </ligand>
</feature>
<feature type="binding site" evidence="1">
    <location>
        <position position="258"/>
    </location>
    <ligand>
        <name>(2E)-4-hydroxy-3-methylbut-2-enyl diphosphate</name>
        <dbReference type="ChEBI" id="CHEBI:128753"/>
    </ligand>
</feature>
<feature type="binding site" evidence="1">
    <location>
        <position position="258"/>
    </location>
    <ligand>
        <name>dimethylallyl diphosphate</name>
        <dbReference type="ChEBI" id="CHEBI:57623"/>
    </ligand>
</feature>
<feature type="binding site" evidence="1">
    <location>
        <position position="258"/>
    </location>
    <ligand>
        <name>isopentenyl diphosphate</name>
        <dbReference type="ChEBI" id="CHEBI:128769"/>
    </ligand>
</feature>
<proteinExistence type="inferred from homology"/>
<evidence type="ECO:0000255" key="1">
    <source>
        <dbReference type="HAMAP-Rule" id="MF_00191"/>
    </source>
</evidence>
<comment type="function">
    <text evidence="1">Catalyzes the conversion of 1-hydroxy-2-methyl-2-(E)-butenyl 4-diphosphate (HMBPP) into a mixture of isopentenyl diphosphate (IPP) and dimethylallyl diphosphate (DMAPP). Acts in the terminal step of the DOXP/MEP pathway for isoprenoid precursor biosynthesis.</text>
</comment>
<comment type="catalytic activity">
    <reaction evidence="1">
        <text>isopentenyl diphosphate + 2 oxidized [2Fe-2S]-[ferredoxin] + H2O = (2E)-4-hydroxy-3-methylbut-2-enyl diphosphate + 2 reduced [2Fe-2S]-[ferredoxin] + 2 H(+)</text>
        <dbReference type="Rhea" id="RHEA:24488"/>
        <dbReference type="Rhea" id="RHEA-COMP:10000"/>
        <dbReference type="Rhea" id="RHEA-COMP:10001"/>
        <dbReference type="ChEBI" id="CHEBI:15377"/>
        <dbReference type="ChEBI" id="CHEBI:15378"/>
        <dbReference type="ChEBI" id="CHEBI:33737"/>
        <dbReference type="ChEBI" id="CHEBI:33738"/>
        <dbReference type="ChEBI" id="CHEBI:128753"/>
        <dbReference type="ChEBI" id="CHEBI:128769"/>
        <dbReference type="EC" id="1.17.7.4"/>
    </reaction>
</comment>
<comment type="catalytic activity">
    <reaction evidence="1">
        <text>dimethylallyl diphosphate + 2 oxidized [2Fe-2S]-[ferredoxin] + H2O = (2E)-4-hydroxy-3-methylbut-2-enyl diphosphate + 2 reduced [2Fe-2S]-[ferredoxin] + 2 H(+)</text>
        <dbReference type="Rhea" id="RHEA:24825"/>
        <dbReference type="Rhea" id="RHEA-COMP:10000"/>
        <dbReference type="Rhea" id="RHEA-COMP:10001"/>
        <dbReference type="ChEBI" id="CHEBI:15377"/>
        <dbReference type="ChEBI" id="CHEBI:15378"/>
        <dbReference type="ChEBI" id="CHEBI:33737"/>
        <dbReference type="ChEBI" id="CHEBI:33738"/>
        <dbReference type="ChEBI" id="CHEBI:57623"/>
        <dbReference type="ChEBI" id="CHEBI:128753"/>
        <dbReference type="EC" id="1.17.7.4"/>
    </reaction>
</comment>
<comment type="cofactor">
    <cofactor evidence="1">
        <name>[4Fe-4S] cluster</name>
        <dbReference type="ChEBI" id="CHEBI:49883"/>
    </cofactor>
    <text evidence="1">Binds 1 [4Fe-4S] cluster per subunit.</text>
</comment>
<comment type="pathway">
    <text evidence="1">Isoprenoid biosynthesis; dimethylallyl diphosphate biosynthesis; dimethylallyl diphosphate from (2E)-4-hydroxy-3-methylbutenyl diphosphate: step 1/1.</text>
</comment>
<comment type="pathway">
    <text evidence="1">Isoprenoid biosynthesis; isopentenyl diphosphate biosynthesis via DXP pathway; isopentenyl diphosphate from 1-deoxy-D-xylulose 5-phosphate: step 6/6.</text>
</comment>
<comment type="similarity">
    <text evidence="1">Belongs to the IspH family.</text>
</comment>
<sequence length="278" mass="31734">MEIELAKSYGFCFGVKRAIKKAEQIKDAATIGPLIHNNEEITRLWKNYNVKTLNDISELSTEQKAIIRTHGITKQDLEKLKQKDIEIFDATCPFVTKPQKICEQMSKEGYEVVIFGDENHPEVKGVRSYVSTKAYVVLDEKELFDIKLPSKIAVVSQTTKKIEKFMEIVNFLMLKVKEVRVFNTICDATFKNQEAINELAKKSDVMVIVGGKNSANTKQLFLIAKNYCEDSYLIENEKEIQKEWFSGKEKCGVSAGASTPDWVIDLVLEKIKEYTKIN</sequence>
<keyword id="KW-0004">4Fe-4S</keyword>
<keyword id="KW-0408">Iron</keyword>
<keyword id="KW-0411">Iron-sulfur</keyword>
<keyword id="KW-0414">Isoprene biosynthesis</keyword>
<keyword id="KW-0479">Metal-binding</keyword>
<keyword id="KW-0560">Oxidoreductase</keyword>
<keyword id="KW-1185">Reference proteome</keyword>
<accession>B9KD74</accession>
<reference key="1">
    <citation type="journal article" date="2008" name="Foodborne Pathog. Dis.">
        <title>The complete genome sequence and analysis of the human pathogen Campylobacter lari.</title>
        <authorList>
            <person name="Miller W.G."/>
            <person name="Wang G."/>
            <person name="Binnewies T.T."/>
            <person name="Parker C.T."/>
        </authorList>
    </citation>
    <scope>NUCLEOTIDE SEQUENCE [LARGE SCALE GENOMIC DNA]</scope>
    <source>
        <strain>RM2100 / D67 / ATCC BAA-1060</strain>
    </source>
</reference>
<protein>
    <recommendedName>
        <fullName evidence="1">4-hydroxy-3-methylbut-2-enyl diphosphate reductase</fullName>
        <shortName evidence="1">HMBPP reductase</shortName>
        <ecNumber evidence="1">1.17.7.4</ecNumber>
    </recommendedName>
</protein>
<organism>
    <name type="scientific">Campylobacter lari (strain RM2100 / D67 / ATCC BAA-1060)</name>
    <dbReference type="NCBI Taxonomy" id="306263"/>
    <lineage>
        <taxon>Bacteria</taxon>
        <taxon>Pseudomonadati</taxon>
        <taxon>Campylobacterota</taxon>
        <taxon>Epsilonproteobacteria</taxon>
        <taxon>Campylobacterales</taxon>
        <taxon>Campylobacteraceae</taxon>
        <taxon>Campylobacter</taxon>
    </lineage>
</organism>